<feature type="chain" id="PRO_1000184904" description="Enterobactin exporter EntS">
    <location>
        <begin position="1"/>
        <end position="416"/>
    </location>
</feature>
<feature type="topological domain" description="Cytoplasmic" evidence="1">
    <location>
        <begin position="1"/>
        <end position="21"/>
    </location>
</feature>
<feature type="transmembrane region" description="Helical" evidence="1">
    <location>
        <begin position="22"/>
        <end position="42"/>
    </location>
</feature>
<feature type="topological domain" description="Periplasmic" evidence="1">
    <location>
        <begin position="43"/>
        <end position="55"/>
    </location>
</feature>
<feature type="transmembrane region" description="Helical" evidence="1">
    <location>
        <begin position="56"/>
        <end position="76"/>
    </location>
</feature>
<feature type="topological domain" description="Cytoplasmic" evidence="1">
    <location>
        <begin position="77"/>
        <end position="83"/>
    </location>
</feature>
<feature type="transmembrane region" description="Helical" evidence="1">
    <location>
        <begin position="84"/>
        <end position="104"/>
    </location>
</feature>
<feature type="topological domain" description="Periplasmic" evidence="1">
    <location>
        <begin position="105"/>
        <end position="109"/>
    </location>
</feature>
<feature type="transmembrane region" description="Helical" evidence="1">
    <location>
        <begin position="110"/>
        <end position="130"/>
    </location>
</feature>
<feature type="topological domain" description="Cytoplasmic" evidence="1">
    <location>
        <begin position="131"/>
        <end position="156"/>
    </location>
</feature>
<feature type="transmembrane region" description="Helical" evidence="1">
    <location>
        <begin position="157"/>
        <end position="177"/>
    </location>
</feature>
<feature type="topological domain" description="Periplasmic" evidence="1">
    <location>
        <position position="178"/>
    </location>
</feature>
<feature type="transmembrane region" description="Helical" evidence="1">
    <location>
        <begin position="179"/>
        <end position="199"/>
    </location>
</feature>
<feature type="topological domain" description="Cytoplasmic" evidence="1">
    <location>
        <begin position="200"/>
        <end position="218"/>
    </location>
</feature>
<feature type="transmembrane region" description="Helical" evidence="1">
    <location>
        <begin position="219"/>
        <end position="239"/>
    </location>
</feature>
<feature type="topological domain" description="Periplasmic" evidence="1">
    <location>
        <begin position="240"/>
        <end position="256"/>
    </location>
</feature>
<feature type="transmembrane region" description="Helical" evidence="1">
    <location>
        <begin position="257"/>
        <end position="277"/>
    </location>
</feature>
<feature type="topological domain" description="Cytoplasmic" evidence="1">
    <location>
        <begin position="278"/>
        <end position="287"/>
    </location>
</feature>
<feature type="transmembrane region" description="Helical" evidence="1">
    <location>
        <begin position="288"/>
        <end position="307"/>
    </location>
</feature>
<feature type="topological domain" description="Periplasmic" evidence="1">
    <location>
        <begin position="308"/>
        <end position="313"/>
    </location>
</feature>
<feature type="transmembrane region" description="Helical" evidence="1">
    <location>
        <begin position="314"/>
        <end position="336"/>
    </location>
</feature>
<feature type="topological domain" description="Cytoplasmic" evidence="1">
    <location>
        <begin position="337"/>
        <end position="356"/>
    </location>
</feature>
<feature type="transmembrane region" description="Helical" evidence="1">
    <location>
        <begin position="357"/>
        <end position="377"/>
    </location>
</feature>
<feature type="topological domain" description="Periplasmic" evidence="1">
    <location>
        <position position="378"/>
    </location>
</feature>
<feature type="transmembrane region" description="Helical" evidence="1">
    <location>
        <begin position="379"/>
        <end position="399"/>
    </location>
</feature>
<feature type="topological domain" description="Cytoplasmic" evidence="1">
    <location>
        <begin position="400"/>
        <end position="416"/>
    </location>
</feature>
<dbReference type="EMBL" id="FM180568">
    <property type="protein sequence ID" value="CAS08041.1"/>
    <property type="molecule type" value="Genomic_DNA"/>
</dbReference>
<dbReference type="RefSeq" id="WP_001041760.1">
    <property type="nucleotide sequence ID" value="NC_011601.1"/>
</dbReference>
<dbReference type="SMR" id="B7UKN4"/>
<dbReference type="KEGG" id="ecg:E2348C_0493"/>
<dbReference type="HOGENOM" id="CLU_034180_11_0_6"/>
<dbReference type="Proteomes" id="UP000008205">
    <property type="component" value="Chromosome"/>
</dbReference>
<dbReference type="GO" id="GO:0005886">
    <property type="term" value="C:plasma membrane"/>
    <property type="evidence" value="ECO:0007669"/>
    <property type="project" value="UniProtKB-SubCell"/>
</dbReference>
<dbReference type="GO" id="GO:0042931">
    <property type="term" value="F:enterobactin transmembrane transporter activity"/>
    <property type="evidence" value="ECO:0007669"/>
    <property type="project" value="InterPro"/>
</dbReference>
<dbReference type="CDD" id="cd06173">
    <property type="entry name" value="MFS_MefA_like"/>
    <property type="match status" value="1"/>
</dbReference>
<dbReference type="FunFam" id="1.20.1250.20:FF:000056">
    <property type="entry name" value="Enterobactin exporter EntS"/>
    <property type="match status" value="1"/>
</dbReference>
<dbReference type="Gene3D" id="1.20.1250.20">
    <property type="entry name" value="MFS general substrate transporter like domains"/>
    <property type="match status" value="1"/>
</dbReference>
<dbReference type="HAMAP" id="MF_01436">
    <property type="entry name" value="MFS_EntS"/>
    <property type="match status" value="1"/>
</dbReference>
<dbReference type="InterPro" id="IPR023722">
    <property type="entry name" value="Enterobactin_exp_EntS"/>
</dbReference>
<dbReference type="InterPro" id="IPR020846">
    <property type="entry name" value="MFS_dom"/>
</dbReference>
<dbReference type="InterPro" id="IPR036259">
    <property type="entry name" value="MFS_trans_sf"/>
</dbReference>
<dbReference type="InterPro" id="IPR010290">
    <property type="entry name" value="TM_effector"/>
</dbReference>
<dbReference type="NCBIfam" id="NF007792">
    <property type="entry name" value="PRK10489.1"/>
    <property type="match status" value="1"/>
</dbReference>
<dbReference type="PANTHER" id="PTHR23513:SF9">
    <property type="entry name" value="ENTEROBACTIN EXPORTER ENTS"/>
    <property type="match status" value="1"/>
</dbReference>
<dbReference type="PANTHER" id="PTHR23513">
    <property type="entry name" value="INTEGRAL MEMBRANE EFFLUX PROTEIN-RELATED"/>
    <property type="match status" value="1"/>
</dbReference>
<dbReference type="Pfam" id="PF05977">
    <property type="entry name" value="MFS_3"/>
    <property type="match status" value="1"/>
</dbReference>
<dbReference type="SUPFAM" id="SSF103473">
    <property type="entry name" value="MFS general substrate transporter"/>
    <property type="match status" value="1"/>
</dbReference>
<dbReference type="PROSITE" id="PS50850">
    <property type="entry name" value="MFS"/>
    <property type="match status" value="1"/>
</dbReference>
<name>ENTS_ECO27</name>
<proteinExistence type="inferred from homology"/>
<reference key="1">
    <citation type="journal article" date="2009" name="J. Bacteriol.">
        <title>Complete genome sequence and comparative genome analysis of enteropathogenic Escherichia coli O127:H6 strain E2348/69.</title>
        <authorList>
            <person name="Iguchi A."/>
            <person name="Thomson N.R."/>
            <person name="Ogura Y."/>
            <person name="Saunders D."/>
            <person name="Ooka T."/>
            <person name="Henderson I.R."/>
            <person name="Harris D."/>
            <person name="Asadulghani M."/>
            <person name="Kurokawa K."/>
            <person name="Dean P."/>
            <person name="Kenny B."/>
            <person name="Quail M.A."/>
            <person name="Thurston S."/>
            <person name="Dougan G."/>
            <person name="Hayashi T."/>
            <person name="Parkhill J."/>
            <person name="Frankel G."/>
        </authorList>
    </citation>
    <scope>NUCLEOTIDE SEQUENCE [LARGE SCALE GENOMIC DNA]</scope>
    <source>
        <strain>E2348/69 / EPEC</strain>
    </source>
</reference>
<keyword id="KW-0997">Cell inner membrane</keyword>
<keyword id="KW-1003">Cell membrane</keyword>
<keyword id="KW-0472">Membrane</keyword>
<keyword id="KW-1185">Reference proteome</keyword>
<keyword id="KW-0812">Transmembrane</keyword>
<keyword id="KW-1133">Transmembrane helix</keyword>
<keyword id="KW-0813">Transport</keyword>
<protein>
    <recommendedName>
        <fullName evidence="1">Enterobactin exporter EntS</fullName>
    </recommendedName>
</protein>
<evidence type="ECO:0000255" key="1">
    <source>
        <dbReference type="HAMAP-Rule" id="MF_01436"/>
    </source>
</evidence>
<accession>B7UKN4</accession>
<gene>
    <name evidence="1" type="primary">entS</name>
    <name type="ordered locus">E2348C_0493</name>
</gene>
<comment type="function">
    <text evidence="1">Component of an export pathway for enterobactin.</text>
</comment>
<comment type="subcellular location">
    <subcellularLocation>
        <location evidence="1">Cell inner membrane</location>
        <topology evidence="1">Multi-pass membrane protein</topology>
    </subcellularLocation>
</comment>
<comment type="similarity">
    <text evidence="1">Belongs to the major facilitator superfamily. EntS (TC 2.A.1.38) family.</text>
</comment>
<organism>
    <name type="scientific">Escherichia coli O127:H6 (strain E2348/69 / EPEC)</name>
    <dbReference type="NCBI Taxonomy" id="574521"/>
    <lineage>
        <taxon>Bacteria</taxon>
        <taxon>Pseudomonadati</taxon>
        <taxon>Pseudomonadota</taxon>
        <taxon>Gammaproteobacteria</taxon>
        <taxon>Enterobacterales</taxon>
        <taxon>Enterobacteriaceae</taxon>
        <taxon>Escherichia</taxon>
    </lineage>
</organism>
<sequence>MNKQSWLLNLSLLKTHPAFRAVFLARFISIVSLGLLGVAVPVQIQIMTHSTWQVGLSVTLTGGAMFVGLMVGGVLADRYERKKVILLARGTCGIGFIGLCLNALLPEPSLLAIYLLGLWDGFFASLGVTALLAATPALVGRENLMQAGAITMLTVRLGSVISPMIGGLLLATGGVAWNYGLAAAGTFITLLPLLSLPALPPPPQPREHPLKSLLAGFRFLLASPLVGGIALLGGLLTMASAVRVLYPALADNWQMSAAQIGFLYAAIPLGAAIGALTSGKLAHSVRPGLLMLLSTLGAFLAIGLFGLMPMWILGVVCLALFGWLSAVSSLLQYTMLQTQTPEAMLGRINGLWTAQNVTGDAIGAALLGGLGAMMTPVASASASGFGLLIIGVLLLLVLVELRRFRQTPPQVTASDS</sequence>